<accession>Q0I088</accession>
<comment type="function">
    <text evidence="1">With S4 and S12 plays an important role in translational accuracy.</text>
</comment>
<comment type="function">
    <text evidence="1">Located at the back of the 30S subunit body where it stabilizes the conformation of the head with respect to the body.</text>
</comment>
<comment type="subunit">
    <text evidence="1">Part of the 30S ribosomal subunit. Contacts proteins S4 and S8.</text>
</comment>
<comment type="domain">
    <text>The N-terminal domain interacts with the head of the 30S subunit; the C-terminal domain interacts with the body and contacts protein S4. The interaction surface between S4 and S5 is involved in control of translational fidelity.</text>
</comment>
<comment type="similarity">
    <text evidence="1">Belongs to the universal ribosomal protein uS5 family.</text>
</comment>
<feature type="chain" id="PRO_0000323201" description="Small ribosomal subunit protein uS5">
    <location>
        <begin position="1"/>
        <end position="167"/>
    </location>
</feature>
<feature type="domain" description="S5 DRBM" evidence="1">
    <location>
        <begin position="12"/>
        <end position="75"/>
    </location>
</feature>
<organism>
    <name type="scientific">Shewanella sp. (strain MR-7)</name>
    <dbReference type="NCBI Taxonomy" id="60481"/>
    <lineage>
        <taxon>Bacteria</taxon>
        <taxon>Pseudomonadati</taxon>
        <taxon>Pseudomonadota</taxon>
        <taxon>Gammaproteobacteria</taxon>
        <taxon>Alteromonadales</taxon>
        <taxon>Shewanellaceae</taxon>
        <taxon>Shewanella</taxon>
    </lineage>
</organism>
<gene>
    <name evidence="1" type="primary">rpsE</name>
    <name type="ordered locus">Shewmr7_0211</name>
</gene>
<evidence type="ECO:0000255" key="1">
    <source>
        <dbReference type="HAMAP-Rule" id="MF_01307"/>
    </source>
</evidence>
<evidence type="ECO:0000305" key="2"/>
<keyword id="KW-0687">Ribonucleoprotein</keyword>
<keyword id="KW-0689">Ribosomal protein</keyword>
<keyword id="KW-0694">RNA-binding</keyword>
<keyword id="KW-0699">rRNA-binding</keyword>
<name>RS5_SHESR</name>
<sequence length="167" mass="17741">MAKLEAQQKDDLQEKLIAVNRVSKVVKGGRIFSFTALTVVGDGNGKVGYGYGKAREVPAAIQKAMEKARRNMVTVELNAGTLHHPVKGRHTGSRVYMQPASQGTGIIAGGAMRAVLEVAGVHNVLSKAYGSTNPINIVRATVDALVHMKSPSQIAAKRGLNVDEIRG</sequence>
<dbReference type="EMBL" id="CP000444">
    <property type="protein sequence ID" value="ABI41217.1"/>
    <property type="molecule type" value="Genomic_DNA"/>
</dbReference>
<dbReference type="SMR" id="Q0I088"/>
<dbReference type="KEGG" id="shm:Shewmr7_0211"/>
<dbReference type="HOGENOM" id="CLU_065898_2_2_6"/>
<dbReference type="GO" id="GO:0015935">
    <property type="term" value="C:small ribosomal subunit"/>
    <property type="evidence" value="ECO:0007669"/>
    <property type="project" value="InterPro"/>
</dbReference>
<dbReference type="GO" id="GO:0019843">
    <property type="term" value="F:rRNA binding"/>
    <property type="evidence" value="ECO:0007669"/>
    <property type="project" value="UniProtKB-UniRule"/>
</dbReference>
<dbReference type="GO" id="GO:0003735">
    <property type="term" value="F:structural constituent of ribosome"/>
    <property type="evidence" value="ECO:0007669"/>
    <property type="project" value="InterPro"/>
</dbReference>
<dbReference type="GO" id="GO:0006412">
    <property type="term" value="P:translation"/>
    <property type="evidence" value="ECO:0007669"/>
    <property type="project" value="UniProtKB-UniRule"/>
</dbReference>
<dbReference type="FunFam" id="3.30.160.20:FF:000001">
    <property type="entry name" value="30S ribosomal protein S5"/>
    <property type="match status" value="1"/>
</dbReference>
<dbReference type="FunFam" id="3.30.230.10:FF:000002">
    <property type="entry name" value="30S ribosomal protein S5"/>
    <property type="match status" value="1"/>
</dbReference>
<dbReference type="Gene3D" id="3.30.160.20">
    <property type="match status" value="1"/>
</dbReference>
<dbReference type="Gene3D" id="3.30.230.10">
    <property type="match status" value="1"/>
</dbReference>
<dbReference type="HAMAP" id="MF_01307_B">
    <property type="entry name" value="Ribosomal_uS5_B"/>
    <property type="match status" value="1"/>
</dbReference>
<dbReference type="InterPro" id="IPR020568">
    <property type="entry name" value="Ribosomal_Su5_D2-typ_SF"/>
</dbReference>
<dbReference type="InterPro" id="IPR000851">
    <property type="entry name" value="Ribosomal_uS5"/>
</dbReference>
<dbReference type="InterPro" id="IPR005712">
    <property type="entry name" value="Ribosomal_uS5_bac-type"/>
</dbReference>
<dbReference type="InterPro" id="IPR005324">
    <property type="entry name" value="Ribosomal_uS5_C"/>
</dbReference>
<dbReference type="InterPro" id="IPR013810">
    <property type="entry name" value="Ribosomal_uS5_N"/>
</dbReference>
<dbReference type="InterPro" id="IPR018192">
    <property type="entry name" value="Ribosomal_uS5_N_CS"/>
</dbReference>
<dbReference type="InterPro" id="IPR014721">
    <property type="entry name" value="Ribsml_uS5_D2-typ_fold_subgr"/>
</dbReference>
<dbReference type="NCBIfam" id="TIGR01021">
    <property type="entry name" value="rpsE_bact"/>
    <property type="match status" value="1"/>
</dbReference>
<dbReference type="PANTHER" id="PTHR48277">
    <property type="entry name" value="MITOCHONDRIAL RIBOSOMAL PROTEIN S5"/>
    <property type="match status" value="1"/>
</dbReference>
<dbReference type="PANTHER" id="PTHR48277:SF1">
    <property type="entry name" value="MITOCHONDRIAL RIBOSOMAL PROTEIN S5"/>
    <property type="match status" value="1"/>
</dbReference>
<dbReference type="Pfam" id="PF00333">
    <property type="entry name" value="Ribosomal_S5"/>
    <property type="match status" value="1"/>
</dbReference>
<dbReference type="Pfam" id="PF03719">
    <property type="entry name" value="Ribosomal_S5_C"/>
    <property type="match status" value="1"/>
</dbReference>
<dbReference type="SUPFAM" id="SSF54768">
    <property type="entry name" value="dsRNA-binding domain-like"/>
    <property type="match status" value="1"/>
</dbReference>
<dbReference type="SUPFAM" id="SSF54211">
    <property type="entry name" value="Ribosomal protein S5 domain 2-like"/>
    <property type="match status" value="1"/>
</dbReference>
<dbReference type="PROSITE" id="PS00585">
    <property type="entry name" value="RIBOSOMAL_S5"/>
    <property type="match status" value="1"/>
</dbReference>
<dbReference type="PROSITE" id="PS50881">
    <property type="entry name" value="S5_DSRBD"/>
    <property type="match status" value="1"/>
</dbReference>
<reference key="1">
    <citation type="submission" date="2006-08" db="EMBL/GenBank/DDBJ databases">
        <title>Complete sequence of chromosome 1 of Shewanella sp. MR-7.</title>
        <authorList>
            <person name="Copeland A."/>
            <person name="Lucas S."/>
            <person name="Lapidus A."/>
            <person name="Barry K."/>
            <person name="Detter J.C."/>
            <person name="Glavina del Rio T."/>
            <person name="Hammon N."/>
            <person name="Israni S."/>
            <person name="Dalin E."/>
            <person name="Tice H."/>
            <person name="Pitluck S."/>
            <person name="Kiss H."/>
            <person name="Brettin T."/>
            <person name="Bruce D."/>
            <person name="Han C."/>
            <person name="Tapia R."/>
            <person name="Gilna P."/>
            <person name="Schmutz J."/>
            <person name="Larimer F."/>
            <person name="Land M."/>
            <person name="Hauser L."/>
            <person name="Kyrpides N."/>
            <person name="Mikhailova N."/>
            <person name="Nealson K."/>
            <person name="Konstantinidis K."/>
            <person name="Klappenbach J."/>
            <person name="Tiedje J."/>
            <person name="Richardson P."/>
        </authorList>
    </citation>
    <scope>NUCLEOTIDE SEQUENCE [LARGE SCALE GENOMIC DNA]</scope>
    <source>
        <strain>MR-7</strain>
    </source>
</reference>
<protein>
    <recommendedName>
        <fullName evidence="1">Small ribosomal subunit protein uS5</fullName>
    </recommendedName>
    <alternativeName>
        <fullName evidence="2">30S ribosomal protein S5</fullName>
    </alternativeName>
</protein>
<proteinExistence type="inferred from homology"/>